<keyword id="KW-0004">4Fe-4S</keyword>
<keyword id="KW-0067">ATP-binding</keyword>
<keyword id="KW-0963">Cytoplasm</keyword>
<keyword id="KW-0408">Iron</keyword>
<keyword id="KW-0411">Iron-sulfur</keyword>
<keyword id="KW-0479">Metal-binding</keyword>
<keyword id="KW-0547">Nucleotide-binding</keyword>
<proteinExistence type="inferred from homology"/>
<name>NUBP1_DROYA</name>
<evidence type="ECO:0000250" key="1">
    <source>
        <dbReference type="UniProtKB" id="Q9VJI9"/>
    </source>
</evidence>
<evidence type="ECO:0000255" key="2">
    <source>
        <dbReference type="HAMAP-Rule" id="MF_03038"/>
    </source>
</evidence>
<sequence length="311" mass="33064">MQAPPPEHCPGVESEQAGKGSACAGCPNQGVCSDPNKKLEDPGKALVVESMKDVSNKLLILSGKGGVGKSTVTSLLTRYLARSNPDSNFGVLDIDICGPSQPRLMGALGESVHQSGYGWSPVGIEDNVCLMSIGFLLDSVDDAIIWRGPKKNGMIRQFLSEVDWGNLDLLLLDTPPGTSDEHLSVVSYLKDDTNPESLRAVMVTTPQEVSLLDVRKEINFCKKQNIPIVGVIENMSSFRCGHCGNSSEIFPAKTGGAAAMCAEMGIPLLGSLPLDQQISKACDSGEDLTEFKNVTTEALEGICSKIMASFS</sequence>
<accession>B4P9A8</accession>
<comment type="function">
    <text evidence="2">Component of the cytosolic iron-sulfur (Fe/S) protein assembly (CIA) machinery. Required for maturation of extramitochondrial Fe-S proteins. The Nubp1-Nubp2 heterotetramer forms a Fe-S scaffold complex, mediating the de novo assembly of an Fe-S cluster and its transfer to target apoproteins.</text>
</comment>
<comment type="cofactor">
    <cofactor evidence="2">
        <name>[4Fe-4S] cluster</name>
        <dbReference type="ChEBI" id="CHEBI:49883"/>
    </cofactor>
    <text evidence="2">Binds 4 [4Fe-4S] clusters per heterotetramer. Contains two stable clusters in the N-termini of Nubp1 and two labile, bridging clusters between subunits of the Nubp1-Nubp2 heterotetramer.</text>
</comment>
<comment type="subunit">
    <text evidence="2">Heterotetramer of 2 Nubp1 and 2 Nubp2 chains.</text>
</comment>
<comment type="subcellular location">
    <subcellularLocation>
        <location evidence="2">Cytoplasm</location>
    </subcellularLocation>
</comment>
<comment type="similarity">
    <text evidence="2">Belongs to the Mrp/NBP35 ATP-binding proteins family. NUBP1/NBP35 subfamily.</text>
</comment>
<organism>
    <name type="scientific">Drosophila yakuba</name>
    <name type="common">Fruit fly</name>
    <dbReference type="NCBI Taxonomy" id="7245"/>
    <lineage>
        <taxon>Eukaryota</taxon>
        <taxon>Metazoa</taxon>
        <taxon>Ecdysozoa</taxon>
        <taxon>Arthropoda</taxon>
        <taxon>Hexapoda</taxon>
        <taxon>Insecta</taxon>
        <taxon>Pterygota</taxon>
        <taxon>Neoptera</taxon>
        <taxon>Endopterygota</taxon>
        <taxon>Diptera</taxon>
        <taxon>Brachycera</taxon>
        <taxon>Muscomorpha</taxon>
        <taxon>Ephydroidea</taxon>
        <taxon>Drosophilidae</taxon>
        <taxon>Drosophila</taxon>
        <taxon>Sophophora</taxon>
    </lineage>
</organism>
<protein>
    <recommendedName>
        <fullName evidence="2">Cytosolic Fe-S cluster assembly factor Nubp1 homolog</fullName>
    </recommendedName>
</protein>
<gene>
    <name evidence="1" type="primary">Nubp1</name>
    <name type="ORF">GE12759</name>
</gene>
<dbReference type="EMBL" id="CM000158">
    <property type="protein sequence ID" value="EDW90237.1"/>
    <property type="molecule type" value="Genomic_DNA"/>
</dbReference>
<dbReference type="SMR" id="B4P9A8"/>
<dbReference type="EnsemblMetazoa" id="FBtr0259277">
    <property type="protein sequence ID" value="FBpp0257769"/>
    <property type="gene ID" value="FBgn0230481"/>
</dbReference>
<dbReference type="EnsemblMetazoa" id="XM_002090489.4">
    <property type="protein sequence ID" value="XP_002090525.1"/>
    <property type="gene ID" value="LOC6529523"/>
</dbReference>
<dbReference type="GeneID" id="6529523"/>
<dbReference type="KEGG" id="dya:Dyak_GE12759"/>
<dbReference type="CTD" id="4682"/>
<dbReference type="eggNOG" id="KOG3022">
    <property type="taxonomic scope" value="Eukaryota"/>
</dbReference>
<dbReference type="HOGENOM" id="CLU_024839_0_1_1"/>
<dbReference type="OMA" id="VSGCPMR"/>
<dbReference type="OrthoDB" id="1741334at2759"/>
<dbReference type="PhylomeDB" id="B4P9A8"/>
<dbReference type="Proteomes" id="UP000002282">
    <property type="component" value="Chromosome 2R"/>
</dbReference>
<dbReference type="GO" id="GO:0005829">
    <property type="term" value="C:cytosol"/>
    <property type="evidence" value="ECO:0000250"/>
    <property type="project" value="UniProtKB"/>
</dbReference>
<dbReference type="GO" id="GO:0051539">
    <property type="term" value="F:4 iron, 4 sulfur cluster binding"/>
    <property type="evidence" value="ECO:0007669"/>
    <property type="project" value="UniProtKB-UniRule"/>
</dbReference>
<dbReference type="GO" id="GO:0005524">
    <property type="term" value="F:ATP binding"/>
    <property type="evidence" value="ECO:0007669"/>
    <property type="project" value="UniProtKB-KW"/>
</dbReference>
<dbReference type="GO" id="GO:0140663">
    <property type="term" value="F:ATP-dependent FeS chaperone activity"/>
    <property type="evidence" value="ECO:0007669"/>
    <property type="project" value="InterPro"/>
</dbReference>
<dbReference type="GO" id="GO:0051536">
    <property type="term" value="F:iron-sulfur cluster binding"/>
    <property type="evidence" value="ECO:0000250"/>
    <property type="project" value="UniProtKB"/>
</dbReference>
<dbReference type="GO" id="GO:0046872">
    <property type="term" value="F:metal ion binding"/>
    <property type="evidence" value="ECO:0007669"/>
    <property type="project" value="UniProtKB-KW"/>
</dbReference>
<dbReference type="GO" id="GO:0016226">
    <property type="term" value="P:iron-sulfur cluster assembly"/>
    <property type="evidence" value="ECO:0000250"/>
    <property type="project" value="UniProtKB"/>
</dbReference>
<dbReference type="CDD" id="cd02037">
    <property type="entry name" value="Mrp_NBP35"/>
    <property type="match status" value="1"/>
</dbReference>
<dbReference type="FunFam" id="3.40.50.300:FF:001759">
    <property type="entry name" value="Cytosolic Fe-S cluster assembly factor NUBP1 homolog"/>
    <property type="match status" value="1"/>
</dbReference>
<dbReference type="Gene3D" id="3.40.50.300">
    <property type="entry name" value="P-loop containing nucleotide triphosphate hydrolases"/>
    <property type="match status" value="1"/>
</dbReference>
<dbReference type="HAMAP" id="MF_02040">
    <property type="entry name" value="Mrp_NBP35"/>
    <property type="match status" value="1"/>
</dbReference>
<dbReference type="HAMAP" id="MF_03038">
    <property type="entry name" value="NUBP1"/>
    <property type="match status" value="1"/>
</dbReference>
<dbReference type="InterPro" id="IPR019591">
    <property type="entry name" value="Mrp/NBP35_ATP-bd"/>
</dbReference>
<dbReference type="InterPro" id="IPR028601">
    <property type="entry name" value="NUBP1/Nbp35"/>
</dbReference>
<dbReference type="InterPro" id="IPR027417">
    <property type="entry name" value="P-loop_NTPase"/>
</dbReference>
<dbReference type="InterPro" id="IPR033756">
    <property type="entry name" value="YlxH/NBP35"/>
</dbReference>
<dbReference type="PANTHER" id="PTHR23264:SF35">
    <property type="entry name" value="CYTOSOLIC FE-S CLUSTER ASSEMBLY FACTOR NUBP1"/>
    <property type="match status" value="1"/>
</dbReference>
<dbReference type="PANTHER" id="PTHR23264">
    <property type="entry name" value="NUCLEOTIDE-BINDING PROTEIN NBP35 YEAST -RELATED"/>
    <property type="match status" value="1"/>
</dbReference>
<dbReference type="Pfam" id="PF10609">
    <property type="entry name" value="ParA"/>
    <property type="match status" value="1"/>
</dbReference>
<dbReference type="SUPFAM" id="SSF52540">
    <property type="entry name" value="P-loop containing nucleoside triphosphate hydrolases"/>
    <property type="match status" value="1"/>
</dbReference>
<feature type="chain" id="PRO_0000382612" description="Cytosolic Fe-S cluster assembly factor Nubp1 homolog">
    <location>
        <begin position="1"/>
        <end position="311"/>
    </location>
</feature>
<feature type="binding site" evidence="2">
    <location>
        <position position="9"/>
    </location>
    <ligand>
        <name>[4Fe-4S] cluster</name>
        <dbReference type="ChEBI" id="CHEBI:49883"/>
        <label>1</label>
    </ligand>
</feature>
<feature type="binding site" evidence="2">
    <location>
        <position position="23"/>
    </location>
    <ligand>
        <name>[4Fe-4S] cluster</name>
        <dbReference type="ChEBI" id="CHEBI:49883"/>
        <label>1</label>
    </ligand>
</feature>
<feature type="binding site" evidence="2">
    <location>
        <position position="26"/>
    </location>
    <ligand>
        <name>[4Fe-4S] cluster</name>
        <dbReference type="ChEBI" id="CHEBI:49883"/>
        <label>1</label>
    </ligand>
</feature>
<feature type="binding site" evidence="2">
    <location>
        <position position="32"/>
    </location>
    <ligand>
        <name>[4Fe-4S] cluster</name>
        <dbReference type="ChEBI" id="CHEBI:49883"/>
        <label>1</label>
    </ligand>
</feature>
<feature type="binding site" evidence="2">
    <location>
        <begin position="63"/>
        <end position="70"/>
    </location>
    <ligand>
        <name>ATP</name>
        <dbReference type="ChEBI" id="CHEBI:30616"/>
    </ligand>
</feature>
<feature type="binding site" evidence="2">
    <location>
        <position position="240"/>
    </location>
    <ligand>
        <name>[4Fe-4S] cluster</name>
        <dbReference type="ChEBI" id="CHEBI:49883"/>
        <label>2</label>
        <note>ligand shared with heterodimeric partner</note>
    </ligand>
</feature>
<feature type="binding site" evidence="2">
    <location>
        <position position="243"/>
    </location>
    <ligand>
        <name>[4Fe-4S] cluster</name>
        <dbReference type="ChEBI" id="CHEBI:49883"/>
        <label>2</label>
        <note>ligand shared with heterodimeric partner</note>
    </ligand>
</feature>
<reference key="1">
    <citation type="journal article" date="2007" name="Nature">
        <title>Evolution of genes and genomes on the Drosophila phylogeny.</title>
        <authorList>
            <consortium name="Drosophila 12 genomes consortium"/>
        </authorList>
    </citation>
    <scope>NUCLEOTIDE SEQUENCE [LARGE SCALE GENOMIC DNA]</scope>
    <source>
        <strain>Tai18E2 / Tucson 14021-0261.01</strain>
    </source>
</reference>